<reference key="1">
    <citation type="journal article" date="1992" name="Genes Dev.">
        <title>The LIM domain-containing homeo box gene Xlim-1 is expressed specifically in the organizer region of Xenopus gastrula embryos.</title>
        <authorList>
            <person name="Taira M."/>
            <person name="Jamrich M."/>
            <person name="Good P.J."/>
            <person name="Dawid I.B."/>
        </authorList>
    </citation>
    <scope>NUCLEOTIDE SEQUENCE [MRNA]</scope>
</reference>
<comment type="subcellular location">
    <subcellularLocation>
        <location evidence="2">Nucleus</location>
    </subcellularLocation>
</comment>
<proteinExistence type="evidence at transcript level"/>
<sequence length="39" mass="4388">KAKQLETLKAAFAATPKPTRHIREQLAQETGLNMRVIQV</sequence>
<accession>P37138</accession>
<evidence type="ECO:0000255" key="1">
    <source>
        <dbReference type="PROSITE-ProRule" id="PRU00108"/>
    </source>
</evidence>
<evidence type="ECO:0000305" key="2"/>
<gene>
    <name type="primary">lim2b</name>
</gene>
<dbReference type="EMBL" id="Z11588">
    <property type="protein sequence ID" value="CAA77673.1"/>
    <property type="molecule type" value="mRNA"/>
</dbReference>
<dbReference type="PIR" id="S23804">
    <property type="entry name" value="S23804"/>
</dbReference>
<dbReference type="SMR" id="P37138"/>
<dbReference type="AGR" id="Xenbase:XB-GENE-17330956"/>
<dbReference type="Xenbase" id="XB-GENE-17330956">
    <property type="gene designation" value="lhx5.L"/>
</dbReference>
<dbReference type="Proteomes" id="UP000186698">
    <property type="component" value="Unplaced"/>
</dbReference>
<dbReference type="GO" id="GO:0005634">
    <property type="term" value="C:nucleus"/>
    <property type="evidence" value="ECO:0007669"/>
    <property type="project" value="UniProtKB-SubCell"/>
</dbReference>
<dbReference type="GO" id="GO:0000981">
    <property type="term" value="F:DNA-binding transcription factor activity, RNA polymerase II-specific"/>
    <property type="evidence" value="ECO:0007669"/>
    <property type="project" value="TreeGrafter"/>
</dbReference>
<dbReference type="GO" id="GO:0000977">
    <property type="term" value="F:RNA polymerase II transcription regulatory region sequence-specific DNA binding"/>
    <property type="evidence" value="ECO:0007669"/>
    <property type="project" value="TreeGrafter"/>
</dbReference>
<dbReference type="GO" id="GO:0030182">
    <property type="term" value="P:neuron differentiation"/>
    <property type="evidence" value="ECO:0007669"/>
    <property type="project" value="TreeGrafter"/>
</dbReference>
<dbReference type="CDD" id="cd00086">
    <property type="entry name" value="homeodomain"/>
    <property type="match status" value="1"/>
</dbReference>
<dbReference type="Gene3D" id="1.10.10.60">
    <property type="entry name" value="Homeodomain-like"/>
    <property type="match status" value="1"/>
</dbReference>
<dbReference type="InterPro" id="IPR001356">
    <property type="entry name" value="HD"/>
</dbReference>
<dbReference type="InterPro" id="IPR009057">
    <property type="entry name" value="Homeodomain-like_sf"/>
</dbReference>
<dbReference type="InterPro" id="IPR050453">
    <property type="entry name" value="LIM_Homeobox_TF"/>
</dbReference>
<dbReference type="PANTHER" id="PTHR24208:SF105">
    <property type="entry name" value="DLIM1"/>
    <property type="match status" value="1"/>
</dbReference>
<dbReference type="PANTHER" id="PTHR24208">
    <property type="entry name" value="LIM/HOMEOBOX PROTEIN LHX"/>
    <property type="match status" value="1"/>
</dbReference>
<dbReference type="Pfam" id="PF00046">
    <property type="entry name" value="Homeodomain"/>
    <property type="match status" value="1"/>
</dbReference>
<dbReference type="SUPFAM" id="SSF46689">
    <property type="entry name" value="Homeodomain-like"/>
    <property type="match status" value="1"/>
</dbReference>
<dbReference type="PROSITE" id="PS50071">
    <property type="entry name" value="HOMEOBOX_2"/>
    <property type="match status" value="1"/>
</dbReference>
<name>LIM2B_XENLA</name>
<protein>
    <recommendedName>
        <fullName>LIM/homeobox protein xLIM-2B</fullName>
    </recommendedName>
</protein>
<feature type="chain" id="PRO_0000075800" description="LIM/homeobox protein xLIM-2B">
    <location>
        <begin position="1" status="less than"/>
        <end position="39" status="greater than"/>
    </location>
</feature>
<feature type="DNA-binding region" description="Homeobox" evidence="1">
    <location>
        <begin position="1" status="less than"/>
        <end position="39" status="greater than"/>
    </location>
</feature>
<feature type="non-terminal residue">
    <location>
        <position position="1"/>
    </location>
</feature>
<feature type="non-terminal residue">
    <location>
        <position position="39"/>
    </location>
</feature>
<organism>
    <name type="scientific">Xenopus laevis</name>
    <name type="common">African clawed frog</name>
    <dbReference type="NCBI Taxonomy" id="8355"/>
    <lineage>
        <taxon>Eukaryota</taxon>
        <taxon>Metazoa</taxon>
        <taxon>Chordata</taxon>
        <taxon>Craniata</taxon>
        <taxon>Vertebrata</taxon>
        <taxon>Euteleostomi</taxon>
        <taxon>Amphibia</taxon>
        <taxon>Batrachia</taxon>
        <taxon>Anura</taxon>
        <taxon>Pipoidea</taxon>
        <taxon>Pipidae</taxon>
        <taxon>Xenopodinae</taxon>
        <taxon>Xenopus</taxon>
        <taxon>Xenopus</taxon>
    </lineage>
</organism>
<keyword id="KW-0238">DNA-binding</keyword>
<keyword id="KW-0371">Homeobox</keyword>
<keyword id="KW-0539">Nucleus</keyword>
<keyword id="KW-1185">Reference proteome</keyword>